<evidence type="ECO:0000255" key="1">
    <source>
        <dbReference type="HAMAP-Rule" id="MF_00508"/>
    </source>
</evidence>
<evidence type="ECO:0000305" key="2"/>
<proteinExistence type="inferred from homology"/>
<accession>B1Y7H1</accession>
<name>RS10_LEPCP</name>
<comment type="function">
    <text evidence="1">Involved in the binding of tRNA to the ribosomes.</text>
</comment>
<comment type="subunit">
    <text evidence="1">Part of the 30S ribosomal subunit.</text>
</comment>
<comment type="similarity">
    <text evidence="1">Belongs to the universal ribosomal protein uS10 family.</text>
</comment>
<organism>
    <name type="scientific">Leptothrix cholodnii (strain ATCC 51168 / LMG 8142 / SP-6)</name>
    <name type="common">Leptothrix discophora (strain SP-6)</name>
    <dbReference type="NCBI Taxonomy" id="395495"/>
    <lineage>
        <taxon>Bacteria</taxon>
        <taxon>Pseudomonadati</taxon>
        <taxon>Pseudomonadota</taxon>
        <taxon>Betaproteobacteria</taxon>
        <taxon>Burkholderiales</taxon>
        <taxon>Sphaerotilaceae</taxon>
        <taxon>Leptothrix</taxon>
    </lineage>
</organism>
<keyword id="KW-1185">Reference proteome</keyword>
<keyword id="KW-0687">Ribonucleoprotein</keyword>
<keyword id="KW-0689">Ribosomal protein</keyword>
<reference key="1">
    <citation type="submission" date="2008-03" db="EMBL/GenBank/DDBJ databases">
        <title>Complete sequence of Leptothrix cholodnii SP-6.</title>
        <authorList>
            <consortium name="US DOE Joint Genome Institute"/>
            <person name="Copeland A."/>
            <person name="Lucas S."/>
            <person name="Lapidus A."/>
            <person name="Glavina del Rio T."/>
            <person name="Dalin E."/>
            <person name="Tice H."/>
            <person name="Bruce D."/>
            <person name="Goodwin L."/>
            <person name="Pitluck S."/>
            <person name="Chertkov O."/>
            <person name="Brettin T."/>
            <person name="Detter J.C."/>
            <person name="Han C."/>
            <person name="Kuske C.R."/>
            <person name="Schmutz J."/>
            <person name="Larimer F."/>
            <person name="Land M."/>
            <person name="Hauser L."/>
            <person name="Kyrpides N."/>
            <person name="Lykidis A."/>
            <person name="Emerson D."/>
            <person name="Richardson P."/>
        </authorList>
    </citation>
    <scope>NUCLEOTIDE SEQUENCE [LARGE SCALE GENOMIC DNA]</scope>
    <source>
        <strain>ATCC 51168 / LMG 8142 / SP-6</strain>
    </source>
</reference>
<protein>
    <recommendedName>
        <fullName evidence="1">Small ribosomal subunit protein uS10</fullName>
    </recommendedName>
    <alternativeName>
        <fullName evidence="2">30S ribosomal protein S10</fullName>
    </alternativeName>
</protein>
<sequence length="103" mass="11913">MQKQKIRIRLKAFDYKLIDQSAQEIVETAKRTGAIVKGPVPLPTRMQRFDILRSPHVNKTSRDQFEMRTHQRLMDIVDPTDKTVDALMKLDLPAGVDVEIKLQ</sequence>
<dbReference type="EMBL" id="CP001013">
    <property type="protein sequence ID" value="ACB36119.1"/>
    <property type="molecule type" value="Genomic_DNA"/>
</dbReference>
<dbReference type="RefSeq" id="WP_012348866.1">
    <property type="nucleotide sequence ID" value="NC_010524.1"/>
</dbReference>
<dbReference type="SMR" id="B1Y7H1"/>
<dbReference type="STRING" id="395495.Lcho_3865"/>
<dbReference type="KEGG" id="lch:Lcho_3865"/>
<dbReference type="eggNOG" id="COG0051">
    <property type="taxonomic scope" value="Bacteria"/>
</dbReference>
<dbReference type="HOGENOM" id="CLU_122625_1_3_4"/>
<dbReference type="OrthoDB" id="9804464at2"/>
<dbReference type="Proteomes" id="UP000001693">
    <property type="component" value="Chromosome"/>
</dbReference>
<dbReference type="GO" id="GO:1990904">
    <property type="term" value="C:ribonucleoprotein complex"/>
    <property type="evidence" value="ECO:0007669"/>
    <property type="project" value="UniProtKB-KW"/>
</dbReference>
<dbReference type="GO" id="GO:0005840">
    <property type="term" value="C:ribosome"/>
    <property type="evidence" value="ECO:0007669"/>
    <property type="project" value="UniProtKB-KW"/>
</dbReference>
<dbReference type="GO" id="GO:0003735">
    <property type="term" value="F:structural constituent of ribosome"/>
    <property type="evidence" value="ECO:0007669"/>
    <property type="project" value="InterPro"/>
</dbReference>
<dbReference type="GO" id="GO:0000049">
    <property type="term" value="F:tRNA binding"/>
    <property type="evidence" value="ECO:0007669"/>
    <property type="project" value="UniProtKB-UniRule"/>
</dbReference>
<dbReference type="GO" id="GO:0006412">
    <property type="term" value="P:translation"/>
    <property type="evidence" value="ECO:0007669"/>
    <property type="project" value="UniProtKB-UniRule"/>
</dbReference>
<dbReference type="FunFam" id="3.30.70.600:FF:000001">
    <property type="entry name" value="30S ribosomal protein S10"/>
    <property type="match status" value="1"/>
</dbReference>
<dbReference type="Gene3D" id="3.30.70.600">
    <property type="entry name" value="Ribosomal protein S10 domain"/>
    <property type="match status" value="1"/>
</dbReference>
<dbReference type="HAMAP" id="MF_00508">
    <property type="entry name" value="Ribosomal_uS10"/>
    <property type="match status" value="1"/>
</dbReference>
<dbReference type="InterPro" id="IPR001848">
    <property type="entry name" value="Ribosomal_uS10"/>
</dbReference>
<dbReference type="InterPro" id="IPR018268">
    <property type="entry name" value="Ribosomal_uS10_CS"/>
</dbReference>
<dbReference type="InterPro" id="IPR027486">
    <property type="entry name" value="Ribosomal_uS10_dom"/>
</dbReference>
<dbReference type="InterPro" id="IPR036838">
    <property type="entry name" value="Ribosomal_uS10_dom_sf"/>
</dbReference>
<dbReference type="NCBIfam" id="NF001861">
    <property type="entry name" value="PRK00596.1"/>
    <property type="match status" value="1"/>
</dbReference>
<dbReference type="NCBIfam" id="TIGR01049">
    <property type="entry name" value="rpsJ_bact"/>
    <property type="match status" value="1"/>
</dbReference>
<dbReference type="PANTHER" id="PTHR11700">
    <property type="entry name" value="30S RIBOSOMAL PROTEIN S10 FAMILY MEMBER"/>
    <property type="match status" value="1"/>
</dbReference>
<dbReference type="Pfam" id="PF00338">
    <property type="entry name" value="Ribosomal_S10"/>
    <property type="match status" value="1"/>
</dbReference>
<dbReference type="PRINTS" id="PR00971">
    <property type="entry name" value="RIBOSOMALS10"/>
</dbReference>
<dbReference type="SMART" id="SM01403">
    <property type="entry name" value="Ribosomal_S10"/>
    <property type="match status" value="1"/>
</dbReference>
<dbReference type="SUPFAM" id="SSF54999">
    <property type="entry name" value="Ribosomal protein S10"/>
    <property type="match status" value="1"/>
</dbReference>
<dbReference type="PROSITE" id="PS00361">
    <property type="entry name" value="RIBOSOMAL_S10"/>
    <property type="match status" value="1"/>
</dbReference>
<feature type="chain" id="PRO_1000127146" description="Small ribosomal subunit protein uS10">
    <location>
        <begin position="1"/>
        <end position="103"/>
    </location>
</feature>
<gene>
    <name evidence="1" type="primary">rpsJ</name>
    <name type="ordered locus">Lcho_3865</name>
</gene>